<comment type="function">
    <text evidence="1">Cell wall formation. Adds enolpyruvyl to UDP-N-acetylglucosamine.</text>
</comment>
<comment type="catalytic activity">
    <reaction evidence="1">
        <text>phosphoenolpyruvate + UDP-N-acetyl-alpha-D-glucosamine = UDP-N-acetyl-3-O-(1-carboxyvinyl)-alpha-D-glucosamine + phosphate</text>
        <dbReference type="Rhea" id="RHEA:18681"/>
        <dbReference type="ChEBI" id="CHEBI:43474"/>
        <dbReference type="ChEBI" id="CHEBI:57705"/>
        <dbReference type="ChEBI" id="CHEBI:58702"/>
        <dbReference type="ChEBI" id="CHEBI:68483"/>
        <dbReference type="EC" id="2.5.1.7"/>
    </reaction>
</comment>
<comment type="pathway">
    <text evidence="1">Cell wall biogenesis; peptidoglycan biosynthesis.</text>
</comment>
<comment type="subcellular location">
    <subcellularLocation>
        <location evidence="1">Cytoplasm</location>
    </subcellularLocation>
</comment>
<comment type="similarity">
    <text evidence="1">Belongs to the EPSP synthase family. MurA subfamily.</text>
</comment>
<reference key="1">
    <citation type="journal article" date="2000" name="Nucleic Acids Res.">
        <title>Complete genome sequence of the alkaliphilic bacterium Bacillus halodurans and genomic sequence comparison with Bacillus subtilis.</title>
        <authorList>
            <person name="Takami H."/>
            <person name="Nakasone K."/>
            <person name="Takaki Y."/>
            <person name="Maeno G."/>
            <person name="Sasaki R."/>
            <person name="Masui N."/>
            <person name="Fuji F."/>
            <person name="Hirama C."/>
            <person name="Nakamura Y."/>
            <person name="Ogasawara N."/>
            <person name="Kuhara S."/>
            <person name="Horikoshi K."/>
        </authorList>
    </citation>
    <scope>NUCLEOTIDE SEQUENCE [LARGE SCALE GENOMIC DNA]</scope>
    <source>
        <strain>ATCC BAA-125 / DSM 18197 / FERM 7344 / JCM 9153 / C-125</strain>
    </source>
</reference>
<dbReference type="EC" id="2.5.1.7" evidence="1"/>
<dbReference type="EMBL" id="BA000004">
    <property type="protein sequence ID" value="BAB07468.1"/>
    <property type="molecule type" value="Genomic_DNA"/>
</dbReference>
<dbReference type="PIR" id="E84118">
    <property type="entry name" value="E84118"/>
</dbReference>
<dbReference type="RefSeq" id="WP_010899874.1">
    <property type="nucleotide sequence ID" value="NC_002570.2"/>
</dbReference>
<dbReference type="SMR" id="Q9K6I0"/>
<dbReference type="STRING" id="272558.gene:10729662"/>
<dbReference type="KEGG" id="bha:BH3749"/>
<dbReference type="eggNOG" id="COG0766">
    <property type="taxonomic scope" value="Bacteria"/>
</dbReference>
<dbReference type="HOGENOM" id="CLU_027387_0_0_9"/>
<dbReference type="OrthoDB" id="9803760at2"/>
<dbReference type="UniPathway" id="UPA00219"/>
<dbReference type="Proteomes" id="UP000001258">
    <property type="component" value="Chromosome"/>
</dbReference>
<dbReference type="GO" id="GO:0005737">
    <property type="term" value="C:cytoplasm"/>
    <property type="evidence" value="ECO:0007669"/>
    <property type="project" value="UniProtKB-SubCell"/>
</dbReference>
<dbReference type="GO" id="GO:0008760">
    <property type="term" value="F:UDP-N-acetylglucosamine 1-carboxyvinyltransferase activity"/>
    <property type="evidence" value="ECO:0007669"/>
    <property type="project" value="UniProtKB-UniRule"/>
</dbReference>
<dbReference type="GO" id="GO:0051301">
    <property type="term" value="P:cell division"/>
    <property type="evidence" value="ECO:0007669"/>
    <property type="project" value="UniProtKB-KW"/>
</dbReference>
<dbReference type="GO" id="GO:0071555">
    <property type="term" value="P:cell wall organization"/>
    <property type="evidence" value="ECO:0007669"/>
    <property type="project" value="UniProtKB-KW"/>
</dbReference>
<dbReference type="GO" id="GO:0009252">
    <property type="term" value="P:peptidoglycan biosynthetic process"/>
    <property type="evidence" value="ECO:0007669"/>
    <property type="project" value="UniProtKB-UniRule"/>
</dbReference>
<dbReference type="GO" id="GO:0008360">
    <property type="term" value="P:regulation of cell shape"/>
    <property type="evidence" value="ECO:0007669"/>
    <property type="project" value="UniProtKB-KW"/>
</dbReference>
<dbReference type="GO" id="GO:0019277">
    <property type="term" value="P:UDP-N-acetylgalactosamine biosynthetic process"/>
    <property type="evidence" value="ECO:0007669"/>
    <property type="project" value="InterPro"/>
</dbReference>
<dbReference type="CDD" id="cd01555">
    <property type="entry name" value="UdpNAET"/>
    <property type="match status" value="1"/>
</dbReference>
<dbReference type="FunFam" id="3.65.10.10:FF:000001">
    <property type="entry name" value="UDP-N-acetylglucosamine 1-carboxyvinyltransferase"/>
    <property type="match status" value="1"/>
</dbReference>
<dbReference type="Gene3D" id="3.65.10.10">
    <property type="entry name" value="Enolpyruvate transferase domain"/>
    <property type="match status" value="2"/>
</dbReference>
<dbReference type="HAMAP" id="MF_00111">
    <property type="entry name" value="MurA"/>
    <property type="match status" value="1"/>
</dbReference>
<dbReference type="InterPro" id="IPR001986">
    <property type="entry name" value="Enolpyruvate_Tfrase_dom"/>
</dbReference>
<dbReference type="InterPro" id="IPR036968">
    <property type="entry name" value="Enolpyruvate_Tfrase_sf"/>
</dbReference>
<dbReference type="InterPro" id="IPR050068">
    <property type="entry name" value="MurA_subfamily"/>
</dbReference>
<dbReference type="InterPro" id="IPR013792">
    <property type="entry name" value="RNA3'P_cycl/enolpyr_Trfase_a/b"/>
</dbReference>
<dbReference type="InterPro" id="IPR005750">
    <property type="entry name" value="UDP_GlcNAc_COvinyl_MurA"/>
</dbReference>
<dbReference type="NCBIfam" id="TIGR01072">
    <property type="entry name" value="murA"/>
    <property type="match status" value="1"/>
</dbReference>
<dbReference type="NCBIfam" id="NF006873">
    <property type="entry name" value="PRK09369.1"/>
    <property type="match status" value="1"/>
</dbReference>
<dbReference type="PANTHER" id="PTHR43783">
    <property type="entry name" value="UDP-N-ACETYLGLUCOSAMINE 1-CARBOXYVINYLTRANSFERASE"/>
    <property type="match status" value="1"/>
</dbReference>
<dbReference type="PANTHER" id="PTHR43783:SF1">
    <property type="entry name" value="UDP-N-ACETYLGLUCOSAMINE 1-CARBOXYVINYLTRANSFERASE"/>
    <property type="match status" value="1"/>
</dbReference>
<dbReference type="Pfam" id="PF00275">
    <property type="entry name" value="EPSP_synthase"/>
    <property type="match status" value="1"/>
</dbReference>
<dbReference type="SUPFAM" id="SSF55205">
    <property type="entry name" value="EPT/RTPC-like"/>
    <property type="match status" value="1"/>
</dbReference>
<protein>
    <recommendedName>
        <fullName evidence="1">UDP-N-acetylglucosamine 1-carboxyvinyltransferase 1</fullName>
        <ecNumber evidence="1">2.5.1.7</ecNumber>
    </recommendedName>
    <alternativeName>
        <fullName evidence="1">Enoylpyruvate transferase 1</fullName>
    </alternativeName>
    <alternativeName>
        <fullName evidence="1">UDP-N-acetylglucosamine enolpyruvyl transferase 1</fullName>
        <shortName evidence="1">EPT 1</shortName>
    </alternativeName>
</protein>
<keyword id="KW-0131">Cell cycle</keyword>
<keyword id="KW-0132">Cell division</keyword>
<keyword id="KW-0133">Cell shape</keyword>
<keyword id="KW-0961">Cell wall biogenesis/degradation</keyword>
<keyword id="KW-0963">Cytoplasm</keyword>
<keyword id="KW-0573">Peptidoglycan synthesis</keyword>
<keyword id="KW-0670">Pyruvate</keyword>
<keyword id="KW-1185">Reference proteome</keyword>
<keyword id="KW-0808">Transferase</keyword>
<proteinExistence type="inferred from homology"/>
<evidence type="ECO:0000255" key="1">
    <source>
        <dbReference type="HAMAP-Rule" id="MF_00111"/>
    </source>
</evidence>
<sequence>MEKIIVRGGRQLSGSVKVEGAKNAVLPVIAASILASRGTSKIYDVPKLADVYTMKEVLRNLNINVEYENGEFVVNATNPLKTEAPFEYVRKMRASFLVMGPLLARVGHARIALPGGCAIGSRPIDQHLKGFEAMGATVEIGNGFIEAKVEGRLQGTKIYLDFPSVGATENIMMAAAMAEGTTILENAAEEPEIVCLANYLNAMGAKVRGAGTGVIRIEGVDELVGAEHTVISDRIEAGTFMVAAAITGGDVFIEGAVAEHLRPLIAKMHEMGVKTIEEDNGIRVIGPDELKPVDIKTMPHPGFPTDMQSQMMALLLRANGTSVITETVFENRFMHVEEFRRMNGNIKIEGRSAIISGPCQLQGAEVTATDLRAGAALVLAGLVADGHTRVVELKHVDRGYVDLAGKLARLGADIERVVETEHELENLDAPAPLKLNTNLV</sequence>
<feature type="chain" id="PRO_0000178846" description="UDP-N-acetylglucosamine 1-carboxyvinyltransferase 1">
    <location>
        <begin position="1"/>
        <end position="440"/>
    </location>
</feature>
<feature type="active site" description="Proton donor" evidence="1">
    <location>
        <position position="117"/>
    </location>
</feature>
<feature type="binding site" evidence="1">
    <location>
        <begin position="22"/>
        <end position="23"/>
    </location>
    <ligand>
        <name>phosphoenolpyruvate</name>
        <dbReference type="ChEBI" id="CHEBI:58702"/>
    </ligand>
</feature>
<feature type="binding site" evidence="1">
    <location>
        <position position="93"/>
    </location>
    <ligand>
        <name>UDP-N-acetyl-alpha-D-glucosamine</name>
        <dbReference type="ChEBI" id="CHEBI:57705"/>
    </ligand>
</feature>
<feature type="binding site" evidence="1">
    <location>
        <begin position="122"/>
        <end position="126"/>
    </location>
    <ligand>
        <name>UDP-N-acetyl-alpha-D-glucosamine</name>
        <dbReference type="ChEBI" id="CHEBI:57705"/>
    </ligand>
</feature>
<feature type="binding site" evidence="1">
    <location>
        <position position="306"/>
    </location>
    <ligand>
        <name>UDP-N-acetyl-alpha-D-glucosamine</name>
        <dbReference type="ChEBI" id="CHEBI:57705"/>
    </ligand>
</feature>
<feature type="binding site" evidence="1">
    <location>
        <position position="328"/>
    </location>
    <ligand>
        <name>UDP-N-acetyl-alpha-D-glucosamine</name>
        <dbReference type="ChEBI" id="CHEBI:57705"/>
    </ligand>
</feature>
<feature type="modified residue" description="2-(S-cysteinyl)pyruvic acid O-phosphothioketal" evidence="1">
    <location>
        <position position="117"/>
    </location>
</feature>
<gene>
    <name evidence="1" type="primary">murA1</name>
    <name type="synonym">murA</name>
    <name type="ordered locus">BH3749</name>
</gene>
<name>MURA1_HALH5</name>
<accession>Q9K6I0</accession>
<organism>
    <name type="scientific">Halalkalibacterium halodurans (strain ATCC BAA-125 / DSM 18197 / FERM 7344 / JCM 9153 / C-125)</name>
    <name type="common">Bacillus halodurans</name>
    <dbReference type="NCBI Taxonomy" id="272558"/>
    <lineage>
        <taxon>Bacteria</taxon>
        <taxon>Bacillati</taxon>
        <taxon>Bacillota</taxon>
        <taxon>Bacilli</taxon>
        <taxon>Bacillales</taxon>
        <taxon>Bacillaceae</taxon>
        <taxon>Halalkalibacterium (ex Joshi et al. 2022)</taxon>
    </lineage>
</organism>